<protein>
    <recommendedName>
        <fullName>Dual specificity protein kinase shkC</fullName>
        <ecNumber>2.7.11.1</ecNumber>
    </recommendedName>
    <alternativeName>
        <fullName>SH2 domain-containing protein 3</fullName>
    </alternativeName>
    <alternativeName>
        <fullName>SH2 domain-containing protein C</fullName>
    </alternativeName>
</protein>
<dbReference type="EC" id="2.7.11.1"/>
<dbReference type="EMBL" id="AAFI02000023">
    <property type="protein sequence ID" value="EAL68377.1"/>
    <property type="molecule type" value="Genomic_DNA"/>
</dbReference>
<dbReference type="RefSeq" id="XP_642347.1">
    <property type="nucleotide sequence ID" value="XM_637255.1"/>
</dbReference>
<dbReference type="SMR" id="Q54Y55"/>
<dbReference type="FunCoup" id="Q54Y55">
    <property type="interactions" value="3"/>
</dbReference>
<dbReference type="STRING" id="44689.Q54Y55"/>
<dbReference type="PaxDb" id="44689-DDB0230123"/>
<dbReference type="EnsemblProtists" id="EAL68377">
    <property type="protein sequence ID" value="EAL68377"/>
    <property type="gene ID" value="DDB_G0278409"/>
</dbReference>
<dbReference type="GeneID" id="8621552"/>
<dbReference type="KEGG" id="ddi:DDB_G0278409"/>
<dbReference type="dictyBase" id="DDB_G0278409">
    <property type="gene designation" value="shkC"/>
</dbReference>
<dbReference type="VEuPathDB" id="AmoebaDB:DDB_G0278409"/>
<dbReference type="eggNOG" id="KOG0192">
    <property type="taxonomic scope" value="Eukaryota"/>
</dbReference>
<dbReference type="HOGENOM" id="CLU_024030_0_0_1"/>
<dbReference type="InParanoid" id="Q54Y55"/>
<dbReference type="OMA" id="NAGCFTI"/>
<dbReference type="PhylomeDB" id="Q54Y55"/>
<dbReference type="PRO" id="PR:Q54Y55"/>
<dbReference type="Proteomes" id="UP000002195">
    <property type="component" value="Chromosome 3"/>
</dbReference>
<dbReference type="GO" id="GO:0005737">
    <property type="term" value="C:cytoplasm"/>
    <property type="evidence" value="ECO:0000318"/>
    <property type="project" value="GO_Central"/>
</dbReference>
<dbReference type="GO" id="GO:0016020">
    <property type="term" value="C:membrane"/>
    <property type="evidence" value="ECO:0007669"/>
    <property type="project" value="UniProtKB-SubCell"/>
</dbReference>
<dbReference type="GO" id="GO:0005524">
    <property type="term" value="F:ATP binding"/>
    <property type="evidence" value="ECO:0007669"/>
    <property type="project" value="UniProtKB-KW"/>
</dbReference>
<dbReference type="GO" id="GO:0106310">
    <property type="term" value="F:protein serine kinase activity"/>
    <property type="evidence" value="ECO:0007669"/>
    <property type="project" value="RHEA"/>
</dbReference>
<dbReference type="GO" id="GO:0004674">
    <property type="term" value="F:protein serine/threonine kinase activity"/>
    <property type="evidence" value="ECO:0000318"/>
    <property type="project" value="GO_Central"/>
</dbReference>
<dbReference type="GO" id="GO:0004713">
    <property type="term" value="F:protein tyrosine kinase activity"/>
    <property type="evidence" value="ECO:0007669"/>
    <property type="project" value="UniProtKB-KW"/>
</dbReference>
<dbReference type="GO" id="GO:0007165">
    <property type="term" value="P:signal transduction"/>
    <property type="evidence" value="ECO:0000318"/>
    <property type="project" value="GO_Central"/>
</dbReference>
<dbReference type="CDD" id="cd10356">
    <property type="entry name" value="SH2_ShkA_ShkC"/>
    <property type="match status" value="1"/>
</dbReference>
<dbReference type="CDD" id="cd13999">
    <property type="entry name" value="STKc_MAP3K-like"/>
    <property type="match status" value="1"/>
</dbReference>
<dbReference type="FunFam" id="3.30.505.10:FF:000164">
    <property type="match status" value="1"/>
</dbReference>
<dbReference type="FunFam" id="1.10.510.10:FF:000476">
    <property type="entry name" value="PAS domain-containing protein tyrosine kinase family protein"/>
    <property type="match status" value="1"/>
</dbReference>
<dbReference type="FunFam" id="3.30.200.20:FF:000659">
    <property type="entry name" value="SH2-protein kinase domain containing protein"/>
    <property type="match status" value="1"/>
</dbReference>
<dbReference type="Gene3D" id="3.30.200.20">
    <property type="entry name" value="Phosphorylase Kinase, domain 1"/>
    <property type="match status" value="1"/>
</dbReference>
<dbReference type="Gene3D" id="3.30.505.10">
    <property type="entry name" value="SH2 domain"/>
    <property type="match status" value="1"/>
</dbReference>
<dbReference type="Gene3D" id="1.10.510.10">
    <property type="entry name" value="Transferase(Phosphotransferase) domain 1"/>
    <property type="match status" value="1"/>
</dbReference>
<dbReference type="InterPro" id="IPR011009">
    <property type="entry name" value="Kinase-like_dom_sf"/>
</dbReference>
<dbReference type="InterPro" id="IPR000719">
    <property type="entry name" value="Prot_kinase_dom"/>
</dbReference>
<dbReference type="InterPro" id="IPR017441">
    <property type="entry name" value="Protein_kinase_ATP_BS"/>
</dbReference>
<dbReference type="InterPro" id="IPR001245">
    <property type="entry name" value="Ser-Thr/Tyr_kinase_cat_dom"/>
</dbReference>
<dbReference type="InterPro" id="IPR008271">
    <property type="entry name" value="Ser/Thr_kinase_AS"/>
</dbReference>
<dbReference type="InterPro" id="IPR051681">
    <property type="entry name" value="Ser/Thr_Kinases-Pseudokinases"/>
</dbReference>
<dbReference type="InterPro" id="IPR000980">
    <property type="entry name" value="SH2"/>
</dbReference>
<dbReference type="InterPro" id="IPR036860">
    <property type="entry name" value="SH2_dom_sf"/>
</dbReference>
<dbReference type="InterPro" id="IPR035844">
    <property type="entry name" value="ShkA/ShkC_SH2"/>
</dbReference>
<dbReference type="PANTHER" id="PTHR44329:SF306">
    <property type="entry name" value="DUAL SPECIFICITY PROTEIN KINASE SHKC"/>
    <property type="match status" value="1"/>
</dbReference>
<dbReference type="PANTHER" id="PTHR44329">
    <property type="entry name" value="SERINE/THREONINE-PROTEIN KINASE TNNI3K-RELATED"/>
    <property type="match status" value="1"/>
</dbReference>
<dbReference type="Pfam" id="PF07714">
    <property type="entry name" value="PK_Tyr_Ser-Thr"/>
    <property type="match status" value="1"/>
</dbReference>
<dbReference type="Pfam" id="PF00017">
    <property type="entry name" value="SH2"/>
    <property type="match status" value="1"/>
</dbReference>
<dbReference type="PRINTS" id="PR00109">
    <property type="entry name" value="TYRKINASE"/>
</dbReference>
<dbReference type="SMART" id="SM00220">
    <property type="entry name" value="S_TKc"/>
    <property type="match status" value="1"/>
</dbReference>
<dbReference type="SMART" id="SM00252">
    <property type="entry name" value="SH2"/>
    <property type="match status" value="1"/>
</dbReference>
<dbReference type="SUPFAM" id="SSF56112">
    <property type="entry name" value="Protein kinase-like (PK-like)"/>
    <property type="match status" value="1"/>
</dbReference>
<dbReference type="SUPFAM" id="SSF55550">
    <property type="entry name" value="SH2 domain"/>
    <property type="match status" value="1"/>
</dbReference>
<dbReference type="PROSITE" id="PS00107">
    <property type="entry name" value="PROTEIN_KINASE_ATP"/>
    <property type="match status" value="1"/>
</dbReference>
<dbReference type="PROSITE" id="PS50011">
    <property type="entry name" value="PROTEIN_KINASE_DOM"/>
    <property type="match status" value="1"/>
</dbReference>
<dbReference type="PROSITE" id="PS00108">
    <property type="entry name" value="PROTEIN_KINASE_ST"/>
    <property type="match status" value="1"/>
</dbReference>
<dbReference type="PROSITE" id="PS50001">
    <property type="entry name" value="SH2"/>
    <property type="match status" value="1"/>
</dbReference>
<accession>Q54Y55</accession>
<keyword id="KW-0067">ATP-binding</keyword>
<keyword id="KW-0418">Kinase</keyword>
<keyword id="KW-0472">Membrane</keyword>
<keyword id="KW-0547">Nucleotide-binding</keyword>
<keyword id="KW-1185">Reference proteome</keyword>
<keyword id="KW-0723">Serine/threonine-protein kinase</keyword>
<keyword id="KW-0808">Transferase</keyword>
<keyword id="KW-0829">Tyrosine-protein kinase</keyword>
<organism>
    <name type="scientific">Dictyostelium discoideum</name>
    <name type="common">Social amoeba</name>
    <dbReference type="NCBI Taxonomy" id="44689"/>
    <lineage>
        <taxon>Eukaryota</taxon>
        <taxon>Amoebozoa</taxon>
        <taxon>Evosea</taxon>
        <taxon>Eumycetozoa</taxon>
        <taxon>Dictyostelia</taxon>
        <taxon>Dictyosteliales</taxon>
        <taxon>Dictyosteliaceae</taxon>
        <taxon>Dictyostelium</taxon>
    </lineage>
</organism>
<comment type="function">
    <text evidence="1">Required for proper chemotaxis and phagocytosis; proper spatiotemporal control of F-actin levels in chemotaxing cells. Negative regulator of the PI3K (phosphatidylinositol 3 kinase) pathway. Predominantly phosphorylates serines and threonines and tyrosines at a lower level (By similarity).</text>
</comment>
<comment type="catalytic activity">
    <reaction>
        <text>L-seryl-[protein] + ATP = O-phospho-L-seryl-[protein] + ADP + H(+)</text>
        <dbReference type="Rhea" id="RHEA:17989"/>
        <dbReference type="Rhea" id="RHEA-COMP:9863"/>
        <dbReference type="Rhea" id="RHEA-COMP:11604"/>
        <dbReference type="ChEBI" id="CHEBI:15378"/>
        <dbReference type="ChEBI" id="CHEBI:29999"/>
        <dbReference type="ChEBI" id="CHEBI:30616"/>
        <dbReference type="ChEBI" id="CHEBI:83421"/>
        <dbReference type="ChEBI" id="CHEBI:456216"/>
        <dbReference type="EC" id="2.7.11.1"/>
    </reaction>
</comment>
<comment type="catalytic activity">
    <reaction>
        <text>L-threonyl-[protein] + ATP = O-phospho-L-threonyl-[protein] + ADP + H(+)</text>
        <dbReference type="Rhea" id="RHEA:46608"/>
        <dbReference type="Rhea" id="RHEA-COMP:11060"/>
        <dbReference type="Rhea" id="RHEA-COMP:11605"/>
        <dbReference type="ChEBI" id="CHEBI:15378"/>
        <dbReference type="ChEBI" id="CHEBI:30013"/>
        <dbReference type="ChEBI" id="CHEBI:30616"/>
        <dbReference type="ChEBI" id="CHEBI:61977"/>
        <dbReference type="ChEBI" id="CHEBI:456216"/>
        <dbReference type="EC" id="2.7.11.1"/>
    </reaction>
</comment>
<comment type="subcellular location">
    <subcellularLocation>
        <location evidence="1">Membrane</location>
    </subcellularLocation>
</comment>
<comment type="similarity">
    <text evidence="6">Belongs to the protein kinase superfamily. TKL Ser/Thr protein kinase family. SH2 domain-containing protein kinase subfamily.</text>
</comment>
<reference key="1">
    <citation type="journal article" date="2005" name="Nature">
        <title>The genome of the social amoeba Dictyostelium discoideum.</title>
        <authorList>
            <person name="Eichinger L."/>
            <person name="Pachebat J.A."/>
            <person name="Gloeckner G."/>
            <person name="Rajandream M.A."/>
            <person name="Sucgang R."/>
            <person name="Berriman M."/>
            <person name="Song J."/>
            <person name="Olsen R."/>
            <person name="Szafranski K."/>
            <person name="Xu Q."/>
            <person name="Tunggal B."/>
            <person name="Kummerfeld S."/>
            <person name="Madera M."/>
            <person name="Konfortov B.A."/>
            <person name="Rivero F."/>
            <person name="Bankier A.T."/>
            <person name="Lehmann R."/>
            <person name="Hamlin N."/>
            <person name="Davies R."/>
            <person name="Gaudet P."/>
            <person name="Fey P."/>
            <person name="Pilcher K."/>
            <person name="Chen G."/>
            <person name="Saunders D."/>
            <person name="Sodergren E.J."/>
            <person name="Davis P."/>
            <person name="Kerhornou A."/>
            <person name="Nie X."/>
            <person name="Hall N."/>
            <person name="Anjard C."/>
            <person name="Hemphill L."/>
            <person name="Bason N."/>
            <person name="Farbrother P."/>
            <person name="Desany B."/>
            <person name="Just E."/>
            <person name="Morio T."/>
            <person name="Rost R."/>
            <person name="Churcher C.M."/>
            <person name="Cooper J."/>
            <person name="Haydock S."/>
            <person name="van Driessche N."/>
            <person name="Cronin A."/>
            <person name="Goodhead I."/>
            <person name="Muzny D.M."/>
            <person name="Mourier T."/>
            <person name="Pain A."/>
            <person name="Lu M."/>
            <person name="Harper D."/>
            <person name="Lindsay R."/>
            <person name="Hauser H."/>
            <person name="James K.D."/>
            <person name="Quiles M."/>
            <person name="Madan Babu M."/>
            <person name="Saito T."/>
            <person name="Buchrieser C."/>
            <person name="Wardroper A."/>
            <person name="Felder M."/>
            <person name="Thangavelu M."/>
            <person name="Johnson D."/>
            <person name="Knights A."/>
            <person name="Loulseged H."/>
            <person name="Mungall K.L."/>
            <person name="Oliver K."/>
            <person name="Price C."/>
            <person name="Quail M.A."/>
            <person name="Urushihara H."/>
            <person name="Hernandez J."/>
            <person name="Rabbinowitsch E."/>
            <person name="Steffen D."/>
            <person name="Sanders M."/>
            <person name="Ma J."/>
            <person name="Kohara Y."/>
            <person name="Sharp S."/>
            <person name="Simmonds M.N."/>
            <person name="Spiegler S."/>
            <person name="Tivey A."/>
            <person name="Sugano S."/>
            <person name="White B."/>
            <person name="Walker D."/>
            <person name="Woodward J.R."/>
            <person name="Winckler T."/>
            <person name="Tanaka Y."/>
            <person name="Shaulsky G."/>
            <person name="Schleicher M."/>
            <person name="Weinstock G.M."/>
            <person name="Rosenthal A."/>
            <person name="Cox E.C."/>
            <person name="Chisholm R.L."/>
            <person name="Gibbs R.A."/>
            <person name="Loomis W.F."/>
            <person name="Platzer M."/>
            <person name="Kay R.R."/>
            <person name="Williams J.G."/>
            <person name="Dear P.H."/>
            <person name="Noegel A.A."/>
            <person name="Barrell B.G."/>
            <person name="Kuspa A."/>
        </authorList>
    </citation>
    <scope>NUCLEOTIDE SEQUENCE [LARGE SCALE GENOMIC DNA]</scope>
    <source>
        <strain>AX4</strain>
    </source>
</reference>
<reference key="2">
    <citation type="journal article" date="2004" name="Mol. Cell. Proteomics">
        <title>Identification of the linker-SH2 domain of STAT as the origin of the SH2 domain using two-dimensional structural alignment.</title>
        <authorList>
            <person name="Gao Q."/>
            <person name="Hua J."/>
            <person name="Kimura R."/>
            <person name="Headd J.J."/>
            <person name="Fu X.-Y."/>
            <person name="Chin Y.E."/>
        </authorList>
    </citation>
    <scope>IDENTIFICATION</scope>
</reference>
<name>SHKC_DICDI</name>
<feature type="chain" id="PRO_0000327810" description="Dual specificity protein kinase shkC">
    <location>
        <begin position="1"/>
        <end position="506"/>
    </location>
</feature>
<feature type="domain" description="Protein kinase" evidence="2">
    <location>
        <begin position="24"/>
        <end position="284"/>
    </location>
</feature>
<feature type="domain" description="SH2" evidence="3">
    <location>
        <begin position="396"/>
        <end position="488"/>
    </location>
</feature>
<feature type="region of interest" description="Disordered" evidence="5">
    <location>
        <begin position="1"/>
        <end position="21"/>
    </location>
</feature>
<feature type="compositionally biased region" description="Basic and acidic residues" evidence="5">
    <location>
        <begin position="10"/>
        <end position="21"/>
    </location>
</feature>
<feature type="active site" description="Proton acceptor" evidence="2 4">
    <location>
        <position position="147"/>
    </location>
</feature>
<feature type="binding site" evidence="2">
    <location>
        <begin position="30"/>
        <end position="38"/>
    </location>
    <ligand>
        <name>ATP</name>
        <dbReference type="ChEBI" id="CHEBI:30616"/>
    </ligand>
</feature>
<feature type="binding site" evidence="2">
    <location>
        <position position="51"/>
    </location>
    <ligand>
        <name>ATP</name>
        <dbReference type="ChEBI" id="CHEBI:30616"/>
    </ligand>
</feature>
<evidence type="ECO:0000250" key="1"/>
<evidence type="ECO:0000255" key="2">
    <source>
        <dbReference type="PROSITE-ProRule" id="PRU00159"/>
    </source>
</evidence>
<evidence type="ECO:0000255" key="3">
    <source>
        <dbReference type="PROSITE-ProRule" id="PRU00191"/>
    </source>
</evidence>
<evidence type="ECO:0000255" key="4">
    <source>
        <dbReference type="PROSITE-ProRule" id="PRU10027"/>
    </source>
</evidence>
<evidence type="ECO:0000256" key="5">
    <source>
        <dbReference type="SAM" id="MobiDB-lite"/>
    </source>
</evidence>
<evidence type="ECO:0000305" key="6"/>
<sequence>MDSGLGSSYPEERSGPPEIRPEEINFEELIGTGSFGKVYKGRCRQKAVAVKLLHKQNFDAATLSAFRKEVHLMSKIYHPNICLFMGACTIPGRCVIVTELVPKGNLETLLHDQKIQLPLYLRMRMARDAALGINWLHESNPVFVHRDIKSSNLLVDENMRVKICDFGLSALKQKHKMLKDQSSAKGTPLYMAPEVMMFKEFNESSDVYSFGIVLWEILTRKEPFSHHRELEKFREAVCVKHERPPIPNDCLDSLRRLIEKCWDKEPISRPSFKEIISALDHVIIDAAISDLNGRDFWKKSFLTEQEVPWEAFIDALCNWSKAPARNQCDKTSIDYLNIKCLKAVLAESPKSEGTGVETVVNIEKFGKILEFFGPVPEPAPGHSIMDTVREILSQKWFHGDLDTTEAASRLNGQPIGSFLIRFSSTNAGCFTISQVVDGGSIKHQRVSRQGVKFNYQNVIYNSLIEIVSKNGGGANGDVKLDSQLGVPNYKFMSLFCVLNKESEVYQ</sequence>
<gene>
    <name type="primary">shkC</name>
    <name type="ORF">DDB_G0278409</name>
</gene>
<proteinExistence type="inferred from homology"/>